<accession>P44688</accession>
<gene>
    <name evidence="1" type="primary">mutH</name>
    <name type="ordered locus">HI_0403</name>
</gene>
<keyword id="KW-0002">3D-structure</keyword>
<keyword id="KW-0963">Cytoplasm</keyword>
<keyword id="KW-0227">DNA damage</keyword>
<keyword id="KW-0234">DNA repair</keyword>
<keyword id="KW-0255">Endonuclease</keyword>
<keyword id="KW-0378">Hydrolase</keyword>
<keyword id="KW-0540">Nuclease</keyword>
<keyword id="KW-1185">Reference proteome</keyword>
<feature type="chain" id="PRO_0000198669" description="DNA mismatch repair protein MutH">
    <location>
        <begin position="1"/>
        <end position="223"/>
    </location>
</feature>
<feature type="helix" evidence="3">
    <location>
        <begin position="6"/>
        <end position="16"/>
    </location>
</feature>
<feature type="helix" evidence="3">
    <location>
        <begin position="21"/>
        <end position="27"/>
    </location>
</feature>
<feature type="helix" evidence="3">
    <location>
        <begin position="42"/>
        <end position="51"/>
    </location>
</feature>
<feature type="strand" evidence="3">
    <location>
        <begin position="59"/>
        <end position="61"/>
    </location>
</feature>
<feature type="turn" evidence="3">
    <location>
        <begin position="64"/>
        <end position="67"/>
    </location>
</feature>
<feature type="strand" evidence="3">
    <location>
        <begin position="68"/>
        <end position="75"/>
    </location>
</feature>
<feature type="strand" evidence="3">
    <location>
        <begin position="81"/>
        <end position="83"/>
    </location>
</feature>
<feature type="strand" evidence="3">
    <location>
        <begin position="85"/>
        <end position="89"/>
    </location>
</feature>
<feature type="helix" evidence="2">
    <location>
        <begin position="100"/>
        <end position="102"/>
    </location>
</feature>
<feature type="helix" evidence="3">
    <location>
        <begin position="104"/>
        <end position="109"/>
    </location>
</feature>
<feature type="strand" evidence="3">
    <location>
        <begin position="110"/>
        <end position="118"/>
    </location>
</feature>
<feature type="helix" evidence="3">
    <location>
        <begin position="125"/>
        <end position="127"/>
    </location>
</feature>
<feature type="strand" evidence="3">
    <location>
        <begin position="134"/>
        <end position="136"/>
    </location>
</feature>
<feature type="helix" evidence="3">
    <location>
        <begin position="140"/>
        <end position="158"/>
    </location>
</feature>
<feature type="helix" evidence="3">
    <location>
        <begin position="162"/>
        <end position="164"/>
    </location>
</feature>
<feature type="strand" evidence="3">
    <location>
        <begin position="171"/>
        <end position="177"/>
    </location>
</feature>
<feature type="strand" evidence="3">
    <location>
        <begin position="179"/>
        <end position="181"/>
    </location>
</feature>
<feature type="strand" evidence="3">
    <location>
        <begin position="186"/>
        <end position="189"/>
    </location>
</feature>
<feature type="strand" evidence="3">
    <location>
        <begin position="195"/>
        <end position="198"/>
    </location>
</feature>
<feature type="strand" evidence="3">
    <location>
        <begin position="201"/>
        <end position="205"/>
    </location>
</feature>
<feature type="helix" evidence="3">
    <location>
        <begin position="207"/>
        <end position="218"/>
    </location>
</feature>
<evidence type="ECO:0000255" key="1">
    <source>
        <dbReference type="HAMAP-Rule" id="MF_00759"/>
    </source>
</evidence>
<evidence type="ECO:0007829" key="2">
    <source>
        <dbReference type="PDB" id="2AOQ"/>
    </source>
</evidence>
<evidence type="ECO:0007829" key="3">
    <source>
        <dbReference type="PDB" id="2AOR"/>
    </source>
</evidence>
<protein>
    <recommendedName>
        <fullName evidence="1">DNA mismatch repair protein MutH</fullName>
    </recommendedName>
    <alternativeName>
        <fullName evidence="1">Methyl-directed mismatch repair protein</fullName>
    </alternativeName>
</protein>
<comment type="function">
    <text evidence="1">Sequence-specific endonuclease that cleaves unmethylated GATC sequences. It is involved in DNA mismatch repair.</text>
</comment>
<comment type="subcellular location">
    <subcellularLocation>
        <location evidence="1">Cytoplasm</location>
    </subcellularLocation>
</comment>
<comment type="similarity">
    <text evidence="1">Belongs to the MutH family.</text>
</comment>
<proteinExistence type="evidence at protein level"/>
<reference key="1">
    <citation type="journal article" date="1995" name="Science">
        <title>Whole-genome random sequencing and assembly of Haemophilus influenzae Rd.</title>
        <authorList>
            <person name="Fleischmann R.D."/>
            <person name="Adams M.D."/>
            <person name="White O."/>
            <person name="Clayton R.A."/>
            <person name="Kirkness E.F."/>
            <person name="Kerlavage A.R."/>
            <person name="Bult C.J."/>
            <person name="Tomb J.-F."/>
            <person name="Dougherty B.A."/>
            <person name="Merrick J.M."/>
            <person name="McKenney K."/>
            <person name="Sutton G.G."/>
            <person name="FitzHugh W."/>
            <person name="Fields C.A."/>
            <person name="Gocayne J.D."/>
            <person name="Scott J.D."/>
            <person name="Shirley R."/>
            <person name="Liu L.-I."/>
            <person name="Glodek A."/>
            <person name="Kelley J.M."/>
            <person name="Weidman J.F."/>
            <person name="Phillips C.A."/>
            <person name="Spriggs T."/>
            <person name="Hedblom E."/>
            <person name="Cotton M.D."/>
            <person name="Utterback T.R."/>
            <person name="Hanna M.C."/>
            <person name="Nguyen D.T."/>
            <person name="Saudek D.M."/>
            <person name="Brandon R.C."/>
            <person name="Fine L.D."/>
            <person name="Fritchman J.L."/>
            <person name="Fuhrmann J.L."/>
            <person name="Geoghagen N.S.M."/>
            <person name="Gnehm C.L."/>
            <person name="McDonald L.A."/>
            <person name="Small K.V."/>
            <person name="Fraser C.M."/>
            <person name="Smith H.O."/>
            <person name="Venter J.C."/>
        </authorList>
    </citation>
    <scope>NUCLEOTIDE SEQUENCE [LARGE SCALE GENOMIC DNA]</scope>
    <source>
        <strain>ATCC 51907 / DSM 11121 / KW20 / Rd</strain>
    </source>
</reference>
<sequence>MIPQTLEQLLSQAQSIAGLTFGELADELHIPVPIDLKRDKGWVGMLLERALGATAGSKAEQDFSHLGVELKTLPINAEGYPLETTFVSLAPLVQNSGVKWENSHVRHKLSCVLWMPIEGSRHIPLRERHIGAPIFWKPTAEQERQLKQDWEELMDLIVLGKLDQITARIGEVMQLRPKGANSRAVTKGIGKNGEIIDTLPLGFYLRKEFTAQILNAFLETKSL</sequence>
<dbReference type="EMBL" id="L42023">
    <property type="protein sequence ID" value="AAC22062.1"/>
    <property type="molecule type" value="Genomic_DNA"/>
</dbReference>
<dbReference type="PIR" id="H64065">
    <property type="entry name" value="H64065"/>
</dbReference>
<dbReference type="RefSeq" id="NP_438565.1">
    <property type="nucleotide sequence ID" value="NC_000907.1"/>
</dbReference>
<dbReference type="PDB" id="2AOQ">
    <property type="method" value="X-ray"/>
    <property type="resolution" value="2.20 A"/>
    <property type="chains" value="A=1-223"/>
</dbReference>
<dbReference type="PDB" id="2AOR">
    <property type="method" value="X-ray"/>
    <property type="resolution" value="2.00 A"/>
    <property type="chains" value="A/B=1-223"/>
</dbReference>
<dbReference type="PDBsum" id="2AOQ"/>
<dbReference type="PDBsum" id="2AOR"/>
<dbReference type="SMR" id="P44688"/>
<dbReference type="STRING" id="71421.HI_0403"/>
<dbReference type="EnsemblBacteria" id="AAC22062">
    <property type="protein sequence ID" value="AAC22062"/>
    <property type="gene ID" value="HI_0403"/>
</dbReference>
<dbReference type="KEGG" id="hin:HI_0403"/>
<dbReference type="PATRIC" id="fig|71421.8.peg.422"/>
<dbReference type="eggNOG" id="COG3066">
    <property type="taxonomic scope" value="Bacteria"/>
</dbReference>
<dbReference type="HOGENOM" id="CLU_086669_0_0_6"/>
<dbReference type="OrthoDB" id="5634909at2"/>
<dbReference type="PhylomeDB" id="P44688"/>
<dbReference type="BioCyc" id="HINF71421:G1GJ1-418-MONOMER"/>
<dbReference type="EvolutionaryTrace" id="P44688"/>
<dbReference type="Proteomes" id="UP000000579">
    <property type="component" value="Chromosome"/>
</dbReference>
<dbReference type="GO" id="GO:0005737">
    <property type="term" value="C:cytoplasm"/>
    <property type="evidence" value="ECO:0007669"/>
    <property type="project" value="UniProtKB-SubCell"/>
</dbReference>
<dbReference type="GO" id="GO:0003677">
    <property type="term" value="F:DNA binding"/>
    <property type="evidence" value="ECO:0007669"/>
    <property type="project" value="InterPro"/>
</dbReference>
<dbReference type="GO" id="GO:0004519">
    <property type="term" value="F:endonuclease activity"/>
    <property type="evidence" value="ECO:0007669"/>
    <property type="project" value="UniProtKB-UniRule"/>
</dbReference>
<dbReference type="GO" id="GO:0006304">
    <property type="term" value="P:DNA modification"/>
    <property type="evidence" value="ECO:0007669"/>
    <property type="project" value="InterPro"/>
</dbReference>
<dbReference type="GO" id="GO:0006298">
    <property type="term" value="P:mismatch repair"/>
    <property type="evidence" value="ECO:0007669"/>
    <property type="project" value="UniProtKB-UniRule"/>
</dbReference>
<dbReference type="CDD" id="cd00583">
    <property type="entry name" value="MutH-like"/>
    <property type="match status" value="1"/>
</dbReference>
<dbReference type="Gene3D" id="3.40.600.10">
    <property type="entry name" value="DNA mismatch repair MutH/Restriction endonuclease, type II"/>
    <property type="match status" value="1"/>
</dbReference>
<dbReference type="HAMAP" id="MF_00759">
    <property type="entry name" value="MutH"/>
    <property type="match status" value="1"/>
</dbReference>
<dbReference type="InterPro" id="IPR004230">
    <property type="entry name" value="DNA_mismatch_repair_MutH"/>
</dbReference>
<dbReference type="InterPro" id="IPR011337">
    <property type="entry name" value="DNA_rep_MutH/RE_typeII_Sau3AI"/>
</dbReference>
<dbReference type="InterPro" id="IPR037057">
    <property type="entry name" value="DNA_rep_MutH/T2_RE_sf"/>
</dbReference>
<dbReference type="InterPro" id="IPR011335">
    <property type="entry name" value="Restrct_endonuc-II-like"/>
</dbReference>
<dbReference type="NCBIfam" id="TIGR02248">
    <property type="entry name" value="mutH_TIGR"/>
    <property type="match status" value="1"/>
</dbReference>
<dbReference type="NCBIfam" id="NF003458">
    <property type="entry name" value="PRK05070.1"/>
    <property type="match status" value="1"/>
</dbReference>
<dbReference type="Pfam" id="PF02976">
    <property type="entry name" value="MutH"/>
    <property type="match status" value="1"/>
</dbReference>
<dbReference type="SMART" id="SM00927">
    <property type="entry name" value="MutH"/>
    <property type="match status" value="1"/>
</dbReference>
<dbReference type="SUPFAM" id="SSF52980">
    <property type="entry name" value="Restriction endonuclease-like"/>
    <property type="match status" value="1"/>
</dbReference>
<name>MUTH_HAEIN</name>
<organism>
    <name type="scientific">Haemophilus influenzae (strain ATCC 51907 / DSM 11121 / KW20 / Rd)</name>
    <dbReference type="NCBI Taxonomy" id="71421"/>
    <lineage>
        <taxon>Bacteria</taxon>
        <taxon>Pseudomonadati</taxon>
        <taxon>Pseudomonadota</taxon>
        <taxon>Gammaproteobacteria</taxon>
        <taxon>Pasteurellales</taxon>
        <taxon>Pasteurellaceae</taxon>
        <taxon>Haemophilus</taxon>
    </lineage>
</organism>